<evidence type="ECO:0000255" key="1">
    <source>
        <dbReference type="HAMAP-Rule" id="MF_00459"/>
    </source>
</evidence>
<proteinExistence type="inferred from homology"/>
<organism>
    <name type="scientific">Shewanella sp. (strain MR-4)</name>
    <dbReference type="NCBI Taxonomy" id="60480"/>
    <lineage>
        <taxon>Bacteria</taxon>
        <taxon>Pseudomonadati</taxon>
        <taxon>Pseudomonadota</taxon>
        <taxon>Gammaproteobacteria</taxon>
        <taxon>Alteromonadales</taxon>
        <taxon>Shewanellaceae</taxon>
        <taxon>Shewanella</taxon>
    </lineage>
</organism>
<sequence length="192" mass="20675">MSEYLLLLISTVLVNNFVLVKFLGLCPFMGVSSKLESAIGMSMATTFVLTLASILSYLVNQYLLLPFDLGYLRTMSFILVIAVVVQFTEMVVQKTSAALHRALGIYLPLITTNCAVLGVALLNVNEKHDFIQSAIYGFGAAVGFSLVLILFSAMRERLAAADVPMPFKGGAIAMITAGLMSLAFMGFTGLVK</sequence>
<comment type="function">
    <text evidence="1">Part of a membrane-bound complex that couples electron transfer with translocation of ions across the membrane.</text>
</comment>
<comment type="subunit">
    <text evidence="1">The complex is composed of six subunits: RnfA, RnfB, RnfC, RnfD, RnfE and RnfG.</text>
</comment>
<comment type="subcellular location">
    <subcellularLocation>
        <location evidence="1">Cell inner membrane</location>
        <topology evidence="1">Multi-pass membrane protein</topology>
    </subcellularLocation>
</comment>
<comment type="similarity">
    <text evidence="1">Belongs to the NqrDE/RnfAE family.</text>
</comment>
<reference key="1">
    <citation type="submission" date="2006-08" db="EMBL/GenBank/DDBJ databases">
        <title>Complete sequence of Shewanella sp. MR-4.</title>
        <authorList>
            <consortium name="US DOE Joint Genome Institute"/>
            <person name="Copeland A."/>
            <person name="Lucas S."/>
            <person name="Lapidus A."/>
            <person name="Barry K."/>
            <person name="Detter J.C."/>
            <person name="Glavina del Rio T."/>
            <person name="Hammon N."/>
            <person name="Israni S."/>
            <person name="Dalin E."/>
            <person name="Tice H."/>
            <person name="Pitluck S."/>
            <person name="Kiss H."/>
            <person name="Brettin T."/>
            <person name="Bruce D."/>
            <person name="Han C."/>
            <person name="Tapia R."/>
            <person name="Gilna P."/>
            <person name="Schmutz J."/>
            <person name="Larimer F."/>
            <person name="Land M."/>
            <person name="Hauser L."/>
            <person name="Kyrpides N."/>
            <person name="Mikhailova N."/>
            <person name="Nealson K."/>
            <person name="Konstantinidis K."/>
            <person name="Klappenbach J."/>
            <person name="Tiedje J."/>
            <person name="Richardson P."/>
        </authorList>
    </citation>
    <scope>NUCLEOTIDE SEQUENCE [LARGE SCALE GENOMIC DNA]</scope>
    <source>
        <strain>MR-4</strain>
    </source>
</reference>
<protein>
    <recommendedName>
        <fullName evidence="1">Ion-translocating oxidoreductase complex subunit A</fullName>
        <ecNumber evidence="1">7.-.-.-</ecNumber>
    </recommendedName>
    <alternativeName>
        <fullName evidence="1">Rnf electron transport complex subunit A</fullName>
    </alternativeName>
</protein>
<gene>
    <name evidence="1" type="primary">rnfA</name>
    <name type="ordered locus">Shewmr4_2064</name>
</gene>
<feature type="chain" id="PRO_1000013553" description="Ion-translocating oxidoreductase complex subunit A">
    <location>
        <begin position="1"/>
        <end position="192"/>
    </location>
</feature>
<feature type="transmembrane region" description="Helical" evidence="1">
    <location>
        <begin position="5"/>
        <end position="25"/>
    </location>
</feature>
<feature type="transmembrane region" description="Helical" evidence="1">
    <location>
        <begin position="39"/>
        <end position="59"/>
    </location>
</feature>
<feature type="transmembrane region" description="Helical" evidence="1">
    <location>
        <begin position="65"/>
        <end position="85"/>
    </location>
</feature>
<feature type="transmembrane region" description="Helical" evidence="1">
    <location>
        <begin position="102"/>
        <end position="122"/>
    </location>
</feature>
<feature type="transmembrane region" description="Helical" evidence="1">
    <location>
        <begin position="134"/>
        <end position="154"/>
    </location>
</feature>
<feature type="transmembrane region" description="Helical" evidence="1">
    <location>
        <begin position="171"/>
        <end position="191"/>
    </location>
</feature>
<name>RNFA_SHESM</name>
<accession>Q0HII0</accession>
<keyword id="KW-0997">Cell inner membrane</keyword>
<keyword id="KW-1003">Cell membrane</keyword>
<keyword id="KW-0249">Electron transport</keyword>
<keyword id="KW-0472">Membrane</keyword>
<keyword id="KW-1278">Translocase</keyword>
<keyword id="KW-0812">Transmembrane</keyword>
<keyword id="KW-1133">Transmembrane helix</keyword>
<keyword id="KW-0813">Transport</keyword>
<dbReference type="EC" id="7.-.-.-" evidence="1"/>
<dbReference type="EMBL" id="CP000446">
    <property type="protein sequence ID" value="ABI39137.1"/>
    <property type="molecule type" value="Genomic_DNA"/>
</dbReference>
<dbReference type="RefSeq" id="WP_011622827.1">
    <property type="nucleotide sequence ID" value="NC_008321.1"/>
</dbReference>
<dbReference type="SMR" id="Q0HII0"/>
<dbReference type="KEGG" id="she:Shewmr4_2064"/>
<dbReference type="HOGENOM" id="CLU_095255_1_0_6"/>
<dbReference type="GO" id="GO:0005886">
    <property type="term" value="C:plasma membrane"/>
    <property type="evidence" value="ECO:0007669"/>
    <property type="project" value="UniProtKB-SubCell"/>
</dbReference>
<dbReference type="GO" id="GO:0022900">
    <property type="term" value="P:electron transport chain"/>
    <property type="evidence" value="ECO:0007669"/>
    <property type="project" value="UniProtKB-UniRule"/>
</dbReference>
<dbReference type="HAMAP" id="MF_00459">
    <property type="entry name" value="RsxA_RnfA"/>
    <property type="match status" value="1"/>
</dbReference>
<dbReference type="InterPro" id="IPR011293">
    <property type="entry name" value="Ion_transpt_RnfA/RsxA"/>
</dbReference>
<dbReference type="InterPro" id="IPR003667">
    <property type="entry name" value="NqrDE/RnfAE"/>
</dbReference>
<dbReference type="InterPro" id="IPR050133">
    <property type="entry name" value="NqrDE/RnfAE_oxidrdctase"/>
</dbReference>
<dbReference type="NCBIfam" id="NF003481">
    <property type="entry name" value="PRK05151.1"/>
    <property type="match status" value="1"/>
</dbReference>
<dbReference type="NCBIfam" id="TIGR01943">
    <property type="entry name" value="rnfA"/>
    <property type="match status" value="1"/>
</dbReference>
<dbReference type="PANTHER" id="PTHR30335">
    <property type="entry name" value="INTEGRAL MEMBRANE PROTEIN OF SOXR-REDUCING COMPLEX"/>
    <property type="match status" value="1"/>
</dbReference>
<dbReference type="PANTHER" id="PTHR30335:SF0">
    <property type="entry name" value="ION-TRANSLOCATING OXIDOREDUCTASE COMPLEX SUBUNIT A"/>
    <property type="match status" value="1"/>
</dbReference>
<dbReference type="Pfam" id="PF02508">
    <property type="entry name" value="Rnf-Nqr"/>
    <property type="match status" value="1"/>
</dbReference>
<dbReference type="PIRSF" id="PIRSF006102">
    <property type="entry name" value="NQR_DE"/>
    <property type="match status" value="1"/>
</dbReference>